<feature type="chain" id="PRO_1000005776" description="DNA-directed RNA polymerase subunit Rpo10">
    <location>
        <begin position="1"/>
        <end position="62"/>
    </location>
</feature>
<feature type="binding site" evidence="1">
    <location>
        <position position="6"/>
    </location>
    <ligand>
        <name>Zn(2+)</name>
        <dbReference type="ChEBI" id="CHEBI:29105"/>
    </ligand>
</feature>
<feature type="binding site" evidence="1">
    <location>
        <position position="9"/>
    </location>
    <ligand>
        <name>Zn(2+)</name>
        <dbReference type="ChEBI" id="CHEBI:29105"/>
    </ligand>
</feature>
<feature type="binding site" evidence="1">
    <location>
        <position position="43"/>
    </location>
    <ligand>
        <name>Zn(2+)</name>
        <dbReference type="ChEBI" id="CHEBI:29105"/>
    </ligand>
</feature>
<feature type="binding site" evidence="1">
    <location>
        <position position="44"/>
    </location>
    <ligand>
        <name>Zn(2+)</name>
        <dbReference type="ChEBI" id="CHEBI:29105"/>
    </ligand>
</feature>
<comment type="function">
    <text evidence="1">DNA-dependent RNA polymerase (RNAP) catalyzes the transcription of DNA into RNA using the four ribonucleoside triphosphates as substrates.</text>
</comment>
<comment type="catalytic activity">
    <reaction evidence="1">
        <text>RNA(n) + a ribonucleoside 5'-triphosphate = RNA(n+1) + diphosphate</text>
        <dbReference type="Rhea" id="RHEA:21248"/>
        <dbReference type="Rhea" id="RHEA-COMP:14527"/>
        <dbReference type="Rhea" id="RHEA-COMP:17342"/>
        <dbReference type="ChEBI" id="CHEBI:33019"/>
        <dbReference type="ChEBI" id="CHEBI:61557"/>
        <dbReference type="ChEBI" id="CHEBI:140395"/>
        <dbReference type="EC" id="2.7.7.6"/>
    </reaction>
</comment>
<comment type="cofactor">
    <cofactor evidence="1">
        <name>Zn(2+)</name>
        <dbReference type="ChEBI" id="CHEBI:29105"/>
    </cofactor>
    <text evidence="1">Binds 1 zinc ion.</text>
</comment>
<comment type="subunit">
    <text evidence="1">Part of the RNA polymerase complex.</text>
</comment>
<comment type="subcellular location">
    <subcellularLocation>
        <location evidence="1">Cytoplasm</location>
    </subcellularLocation>
</comment>
<comment type="similarity">
    <text evidence="1">Belongs to the archaeal Rpo10/eukaryotic RPB10 RNA polymerase subunit family.</text>
</comment>
<dbReference type="EC" id="2.7.7.6" evidence="1"/>
<dbReference type="EMBL" id="CP000780">
    <property type="protein sequence ID" value="ABS56732.1"/>
    <property type="molecule type" value="Genomic_DNA"/>
</dbReference>
<dbReference type="RefSeq" id="WP_012107792.1">
    <property type="nucleotide sequence ID" value="NC_009712.1"/>
</dbReference>
<dbReference type="SMR" id="A7IAH1"/>
<dbReference type="STRING" id="456442.Mboo_2218"/>
<dbReference type="GeneID" id="5410821"/>
<dbReference type="KEGG" id="mbn:Mboo_2218"/>
<dbReference type="eggNOG" id="arCOG04244">
    <property type="taxonomic scope" value="Archaea"/>
</dbReference>
<dbReference type="HOGENOM" id="CLU_143122_1_1_2"/>
<dbReference type="OrthoDB" id="371754at2157"/>
<dbReference type="Proteomes" id="UP000002408">
    <property type="component" value="Chromosome"/>
</dbReference>
<dbReference type="GO" id="GO:0005737">
    <property type="term" value="C:cytoplasm"/>
    <property type="evidence" value="ECO:0007669"/>
    <property type="project" value="UniProtKB-SubCell"/>
</dbReference>
<dbReference type="GO" id="GO:0000428">
    <property type="term" value="C:DNA-directed RNA polymerase complex"/>
    <property type="evidence" value="ECO:0007669"/>
    <property type="project" value="UniProtKB-KW"/>
</dbReference>
<dbReference type="GO" id="GO:0003677">
    <property type="term" value="F:DNA binding"/>
    <property type="evidence" value="ECO:0007669"/>
    <property type="project" value="InterPro"/>
</dbReference>
<dbReference type="GO" id="GO:0003899">
    <property type="term" value="F:DNA-directed RNA polymerase activity"/>
    <property type="evidence" value="ECO:0007669"/>
    <property type="project" value="UniProtKB-UniRule"/>
</dbReference>
<dbReference type="GO" id="GO:0008270">
    <property type="term" value="F:zinc ion binding"/>
    <property type="evidence" value="ECO:0007669"/>
    <property type="project" value="UniProtKB-UniRule"/>
</dbReference>
<dbReference type="GO" id="GO:0006351">
    <property type="term" value="P:DNA-templated transcription"/>
    <property type="evidence" value="ECO:0007669"/>
    <property type="project" value="UniProtKB-UniRule"/>
</dbReference>
<dbReference type="FunFam" id="1.10.10.60:FF:000335">
    <property type="entry name" value="DNA-directed RNA polymerase subunit N, putative"/>
    <property type="match status" value="1"/>
</dbReference>
<dbReference type="Gene3D" id="1.10.10.60">
    <property type="entry name" value="Homeodomain-like"/>
    <property type="match status" value="1"/>
</dbReference>
<dbReference type="HAMAP" id="MF_00250">
    <property type="entry name" value="RNApol_arch_Rpo10"/>
    <property type="match status" value="1"/>
</dbReference>
<dbReference type="InterPro" id="IPR023580">
    <property type="entry name" value="RNA_pol_su_RPB10"/>
</dbReference>
<dbReference type="InterPro" id="IPR020789">
    <property type="entry name" value="RNA_pol_suN_Zn-BS"/>
</dbReference>
<dbReference type="InterPro" id="IPR000268">
    <property type="entry name" value="RPABC5/Rpb10"/>
</dbReference>
<dbReference type="NCBIfam" id="NF003089">
    <property type="entry name" value="PRK04016.1"/>
    <property type="match status" value="1"/>
</dbReference>
<dbReference type="PANTHER" id="PTHR23431:SF3">
    <property type="entry name" value="DNA-DIRECTED RNA POLYMERASES I, II, AND III SUBUNIT RPABC5"/>
    <property type="match status" value="1"/>
</dbReference>
<dbReference type="PANTHER" id="PTHR23431">
    <property type="entry name" value="DNA-DIRECTED RNA POLYMERASES I, II, AND III SUBUNIT RPABC5 FAMILY MEMBER"/>
    <property type="match status" value="1"/>
</dbReference>
<dbReference type="Pfam" id="PF01194">
    <property type="entry name" value="RNA_pol_N"/>
    <property type="match status" value="1"/>
</dbReference>
<dbReference type="PIRSF" id="PIRSF005653">
    <property type="entry name" value="RNA_pol_N/8_sub"/>
    <property type="match status" value="1"/>
</dbReference>
<dbReference type="SUPFAM" id="SSF46924">
    <property type="entry name" value="RNA polymerase subunit RPB10"/>
    <property type="match status" value="1"/>
</dbReference>
<dbReference type="PROSITE" id="PS01112">
    <property type="entry name" value="RNA_POL_N_8KD"/>
    <property type="match status" value="1"/>
</dbReference>
<protein>
    <recommendedName>
        <fullName evidence="1">DNA-directed RNA polymerase subunit Rpo10</fullName>
        <ecNumber evidence="1">2.7.7.6</ecNumber>
    </recommendedName>
    <alternativeName>
        <fullName evidence="1">DNA-directed RNA polymerase subunit N</fullName>
    </alternativeName>
</protein>
<accession>A7IAH1</accession>
<proteinExistence type="inferred from homology"/>
<evidence type="ECO:0000255" key="1">
    <source>
        <dbReference type="HAMAP-Rule" id="MF_00250"/>
    </source>
</evidence>
<organism>
    <name type="scientific">Methanoregula boonei (strain DSM 21154 / JCM 14090 / 6A8)</name>
    <dbReference type="NCBI Taxonomy" id="456442"/>
    <lineage>
        <taxon>Archaea</taxon>
        <taxon>Methanobacteriati</taxon>
        <taxon>Methanobacteriota</taxon>
        <taxon>Stenosarchaea group</taxon>
        <taxon>Methanomicrobia</taxon>
        <taxon>Methanomicrobiales</taxon>
        <taxon>Methanoregulaceae</taxon>
        <taxon>Methanoregula</taxon>
    </lineage>
</organism>
<name>RPO10_METB6</name>
<reference key="1">
    <citation type="journal article" date="2015" name="Microbiology">
        <title>Genome of Methanoregula boonei 6A8 reveals adaptations to oligotrophic peatland environments.</title>
        <authorList>
            <person name="Braeuer S."/>
            <person name="Cadillo-Quiroz H."/>
            <person name="Kyrpides N."/>
            <person name="Woyke T."/>
            <person name="Goodwin L."/>
            <person name="Detter C."/>
            <person name="Podell S."/>
            <person name="Yavitt J.B."/>
            <person name="Zinder S.H."/>
        </authorList>
    </citation>
    <scope>NUCLEOTIDE SEQUENCE [LARGE SCALE GENOMIC DNA]</scope>
    <source>
        <strain>DSM 21154 / JCM 14090 / 6A8</strain>
    </source>
</reference>
<keyword id="KW-0963">Cytoplasm</keyword>
<keyword id="KW-0240">DNA-directed RNA polymerase</keyword>
<keyword id="KW-0479">Metal-binding</keyword>
<keyword id="KW-0548">Nucleotidyltransferase</keyword>
<keyword id="KW-1185">Reference proteome</keyword>
<keyword id="KW-0804">Transcription</keyword>
<keyword id="KW-0808">Transferase</keyword>
<keyword id="KW-0862">Zinc</keyword>
<sequence>MIPVRCFTCGKVISPAWEEYKARREKGEDPKKILDDLGITRYCCRRMLLTHKEIIDELNPYQ</sequence>
<gene>
    <name evidence="1" type="primary">rpo10</name>
    <name evidence="1" type="synonym">rpoN</name>
    <name type="ordered locus">Mboo_2218</name>
</gene>